<reference key="1">
    <citation type="submission" date="2003-11" db="EMBL/GenBank/DDBJ databases">
        <title>Whole genome sequence of Porphyra yezoensis chloroplast.</title>
        <authorList>
            <person name="Kunimoto M."/>
            <person name="Morishima K."/>
            <person name="Yoshikawa M."/>
            <person name="Fukuda S."/>
            <person name="Kobayashi T."/>
            <person name="Kobayashi M."/>
            <person name="Okazaki T."/>
            <person name="Ohara I."/>
            <person name="Nakayama I."/>
        </authorList>
    </citation>
    <scope>NUCLEOTIDE SEQUENCE [LARGE SCALE GENOMIC DNA]</scope>
    <source>
        <strain>U-51</strain>
    </source>
</reference>
<name>RPOC2_PYRYE</name>
<feature type="chain" id="PRO_0000277200" description="DNA-directed RNA polymerase subunit beta''">
    <location>
        <begin position="1"/>
        <end position="1226"/>
    </location>
</feature>
<feature type="binding site" evidence="1">
    <location>
        <position position="223"/>
    </location>
    <ligand>
        <name>Zn(2+)</name>
        <dbReference type="ChEBI" id="CHEBI:29105"/>
    </ligand>
</feature>
<feature type="binding site" evidence="1">
    <location>
        <position position="297"/>
    </location>
    <ligand>
        <name>Zn(2+)</name>
        <dbReference type="ChEBI" id="CHEBI:29105"/>
    </ligand>
</feature>
<feature type="binding site" evidence="1">
    <location>
        <position position="304"/>
    </location>
    <ligand>
        <name>Zn(2+)</name>
        <dbReference type="ChEBI" id="CHEBI:29105"/>
    </ligand>
</feature>
<feature type="binding site" evidence="1">
    <location>
        <position position="307"/>
    </location>
    <ligand>
        <name>Zn(2+)</name>
        <dbReference type="ChEBI" id="CHEBI:29105"/>
    </ligand>
</feature>
<evidence type="ECO:0000255" key="1">
    <source>
        <dbReference type="HAMAP-Rule" id="MF_01324"/>
    </source>
</evidence>
<keyword id="KW-0150">Chloroplast</keyword>
<keyword id="KW-0240">DNA-directed RNA polymerase</keyword>
<keyword id="KW-0479">Metal-binding</keyword>
<keyword id="KW-0548">Nucleotidyltransferase</keyword>
<keyword id="KW-0934">Plastid</keyword>
<keyword id="KW-0804">Transcription</keyword>
<keyword id="KW-0808">Transferase</keyword>
<keyword id="KW-0862">Zinc</keyword>
<accession>Q1XDN7</accession>
<geneLocation type="chloroplast"/>
<dbReference type="EC" id="2.7.7.6" evidence="1"/>
<dbReference type="EMBL" id="AP006715">
    <property type="protein sequence ID" value="BAE92374.1"/>
    <property type="molecule type" value="Genomic_DNA"/>
</dbReference>
<dbReference type="RefSeq" id="YP_536931.1">
    <property type="nucleotide sequence ID" value="NC_007932.1"/>
</dbReference>
<dbReference type="SMR" id="Q1XDN7"/>
<dbReference type="GeneID" id="3978931"/>
<dbReference type="GO" id="GO:0009507">
    <property type="term" value="C:chloroplast"/>
    <property type="evidence" value="ECO:0007669"/>
    <property type="project" value="UniProtKB-SubCell"/>
</dbReference>
<dbReference type="GO" id="GO:0000428">
    <property type="term" value="C:DNA-directed RNA polymerase complex"/>
    <property type="evidence" value="ECO:0007669"/>
    <property type="project" value="UniProtKB-KW"/>
</dbReference>
<dbReference type="GO" id="GO:0005739">
    <property type="term" value="C:mitochondrion"/>
    <property type="evidence" value="ECO:0007669"/>
    <property type="project" value="GOC"/>
</dbReference>
<dbReference type="GO" id="GO:0003677">
    <property type="term" value="F:DNA binding"/>
    <property type="evidence" value="ECO:0007669"/>
    <property type="project" value="UniProtKB-UniRule"/>
</dbReference>
<dbReference type="GO" id="GO:0003899">
    <property type="term" value="F:DNA-directed RNA polymerase activity"/>
    <property type="evidence" value="ECO:0007669"/>
    <property type="project" value="UniProtKB-UniRule"/>
</dbReference>
<dbReference type="GO" id="GO:0008270">
    <property type="term" value="F:zinc ion binding"/>
    <property type="evidence" value="ECO:0007669"/>
    <property type="project" value="UniProtKB-UniRule"/>
</dbReference>
<dbReference type="GO" id="GO:0006351">
    <property type="term" value="P:DNA-templated transcription"/>
    <property type="evidence" value="ECO:0007669"/>
    <property type="project" value="UniProtKB-UniRule"/>
</dbReference>
<dbReference type="CDD" id="cd02655">
    <property type="entry name" value="RNAP_beta'_C"/>
    <property type="match status" value="1"/>
</dbReference>
<dbReference type="FunFam" id="1.10.150.390:FF:000002">
    <property type="entry name" value="DNA-directed RNA polymerase subunit beta"/>
    <property type="match status" value="1"/>
</dbReference>
<dbReference type="Gene3D" id="1.10.132.30">
    <property type="match status" value="1"/>
</dbReference>
<dbReference type="Gene3D" id="1.10.150.390">
    <property type="match status" value="1"/>
</dbReference>
<dbReference type="Gene3D" id="1.10.1790.20">
    <property type="match status" value="1"/>
</dbReference>
<dbReference type="Gene3D" id="1.10.274.100">
    <property type="entry name" value="RNA polymerase Rpb1, domain 3"/>
    <property type="match status" value="1"/>
</dbReference>
<dbReference type="HAMAP" id="MF_01324">
    <property type="entry name" value="RNApol_bact_RpoC2"/>
    <property type="match status" value="1"/>
</dbReference>
<dbReference type="InterPro" id="IPR012756">
    <property type="entry name" value="DNA-dir_RpoC2_beta_pp"/>
</dbReference>
<dbReference type="InterPro" id="IPR045867">
    <property type="entry name" value="DNA-dir_RpoC_beta_prime"/>
</dbReference>
<dbReference type="InterPro" id="IPR007066">
    <property type="entry name" value="RNA_pol_Rpb1_3"/>
</dbReference>
<dbReference type="InterPro" id="IPR042102">
    <property type="entry name" value="RNA_pol_Rpb1_3_sf"/>
</dbReference>
<dbReference type="InterPro" id="IPR007083">
    <property type="entry name" value="RNA_pol_Rpb1_4"/>
</dbReference>
<dbReference type="InterPro" id="IPR007081">
    <property type="entry name" value="RNA_pol_Rpb1_5"/>
</dbReference>
<dbReference type="InterPro" id="IPR038120">
    <property type="entry name" value="Rpb1_funnel_sf"/>
</dbReference>
<dbReference type="NCBIfam" id="TIGR02388">
    <property type="entry name" value="rpoC2_cyan"/>
    <property type="match status" value="1"/>
</dbReference>
<dbReference type="PANTHER" id="PTHR19376">
    <property type="entry name" value="DNA-DIRECTED RNA POLYMERASE"/>
    <property type="match status" value="1"/>
</dbReference>
<dbReference type="PANTHER" id="PTHR19376:SF68">
    <property type="entry name" value="DNA-DIRECTED RNA POLYMERASE SUBUNIT BETA"/>
    <property type="match status" value="1"/>
</dbReference>
<dbReference type="Pfam" id="PF04983">
    <property type="entry name" value="RNA_pol_Rpb1_3"/>
    <property type="match status" value="1"/>
</dbReference>
<dbReference type="Pfam" id="PF05000">
    <property type="entry name" value="RNA_pol_Rpb1_4"/>
    <property type="match status" value="1"/>
</dbReference>
<dbReference type="Pfam" id="PF04998">
    <property type="entry name" value="RNA_pol_Rpb1_5"/>
    <property type="match status" value="2"/>
</dbReference>
<dbReference type="SUPFAM" id="SSF64484">
    <property type="entry name" value="beta and beta-prime subunits of DNA dependent RNA-polymerase"/>
    <property type="match status" value="1"/>
</dbReference>
<sequence length="1226" mass="136878">MDNRRSLAQPSFSNKVIDTNELKNLIVWAFRNYGIARAANMADKLKDLGFHYATQAGISLSLEDLRIPPSKQSLLLGTIEDIKATENKYRRGEITAVERFQKVIDTWNNASESLKQEVIKYFKETDPLNAVSMMAFSGARGNISQVRQLVGMRGLMADPQGQIIDLPISSNFREGLTVTDYFISSYGARKGLVDTALRTADSGYLTRRLVDVSQDVIIREVDCKTNKGIILEDLVDTQKILINLEQALSGRVLAENVFHPETNCLIAHTNQDVSPKLAKEITKAGIKKVLVRSPVTCNSRSSVCQYCYGWNLAHGRLVDLGEAVGIIAAQSIGEPGTQLTMRTFHTGGVFTGELAEQIYAPIDGQLIDLDIESYTDVRTRHGEQALITKKPTQVTIRSKKNQKSIINLSKGTTLLICDGELVSKDQVIAESPRRNRLMTERAQKHVVSDLSGKICFSNLTVEETDNNQYTTRITKTGGLIWVLSGEVYSISDSANVIVHKEDKTKAGTILAQTELINHYAGEVRIHQNTNSSITNIQVITESIVIPGCYIYTDVIHKKESYILETEKKQKFLFKAIPNQKIQDGYTVAELISDTYKTTSGGIIKYLDLNVSKKKTGLDKDAYEILSPGYILWISEETHEINKDSSLILVHNGDVIESGTELVKNIFSKSSGIAEIIEKDGIVREIIIKPGSIYKLSEVYSNNDKSRGFLRPGERLHNNISTDKLVYWEYIENEQMPYILIRPVIVYSIPETKSSLIENLVSQKPSQTKLKLVKRTPFRDGERVKSIEGVHLVTTNLVAEIEHRDDNLISSIEFSAKESGNNYFDLRLSTFETLSIKSIDVNKSEKQQSQTRIIVKNGEYIKPFTVVASTEIIAMSEGTVEEIYSEKNTSRRILIATSSDKKTFNIGKSTVKVSVGDWIRCGDFITENMTSLDSGQIIEISSRSVTLRIARPYLVSNGAILHVDNNALIRRGETLAILVFDRAKTGDIIQGLPRIEEILEARKKTDVLLNPHDILDASFDLYIECGLALYEAARLSFQEIQLLLVKEVQLVYQSQGVNISDKHVEVIVRQMTSKVKIENGEETGYLPGELVELQKIEQTNKAITLRNKINASYRPVLLGITQASLNTESFISAASFQETTKVLTEAAISGKLDWLRGLKENVIIGRLIPAGTGFNMYDNCNGSSLEKKNLTANTNDESTISSVRDDLDDIILDDRTARNYFSNKSVE</sequence>
<gene>
    <name evidence="1" type="primary">rpoC2</name>
</gene>
<protein>
    <recommendedName>
        <fullName evidence="1">DNA-directed RNA polymerase subunit beta''</fullName>
        <ecNumber evidence="1">2.7.7.6</ecNumber>
    </recommendedName>
    <alternativeName>
        <fullName evidence="1">PEP</fullName>
    </alternativeName>
    <alternativeName>
        <fullName evidence="1">Plastid-encoded RNA polymerase subunit beta''</fullName>
        <shortName evidence="1">RNA polymerase subunit beta''</shortName>
    </alternativeName>
</protein>
<proteinExistence type="inferred from homology"/>
<comment type="function">
    <text evidence="1">DNA-dependent RNA polymerase catalyzes the transcription of DNA into RNA using the four ribonucleoside triphosphates as substrates.</text>
</comment>
<comment type="catalytic activity">
    <reaction evidence="1">
        <text>RNA(n) + a ribonucleoside 5'-triphosphate = RNA(n+1) + diphosphate</text>
        <dbReference type="Rhea" id="RHEA:21248"/>
        <dbReference type="Rhea" id="RHEA-COMP:14527"/>
        <dbReference type="Rhea" id="RHEA-COMP:17342"/>
        <dbReference type="ChEBI" id="CHEBI:33019"/>
        <dbReference type="ChEBI" id="CHEBI:61557"/>
        <dbReference type="ChEBI" id="CHEBI:140395"/>
        <dbReference type="EC" id="2.7.7.6"/>
    </reaction>
</comment>
<comment type="cofactor">
    <cofactor evidence="1">
        <name>Zn(2+)</name>
        <dbReference type="ChEBI" id="CHEBI:29105"/>
    </cofactor>
    <text evidence="1">Binds 1 Zn(2+) ion per subunit.</text>
</comment>
<comment type="subunit">
    <text evidence="1">In plastids the minimal PEP RNA polymerase catalytic core is composed of four subunits: alpha, beta, beta', and beta''. When a (nuclear-encoded) sigma factor is associated with the core the holoenzyme is formed, which can initiate transcription.</text>
</comment>
<comment type="subcellular location">
    <subcellularLocation>
        <location evidence="1">Plastid</location>
        <location evidence="1">Chloroplast</location>
    </subcellularLocation>
</comment>
<comment type="similarity">
    <text evidence="1">Belongs to the RNA polymerase beta' chain family. RpoC2 subfamily.</text>
</comment>
<organism>
    <name type="scientific">Pyropia yezoensis</name>
    <name type="common">Susabi-nori</name>
    <name type="synonym">Porphyra yezoensis</name>
    <dbReference type="NCBI Taxonomy" id="2788"/>
    <lineage>
        <taxon>Eukaryota</taxon>
        <taxon>Rhodophyta</taxon>
        <taxon>Bangiophyceae</taxon>
        <taxon>Bangiales</taxon>
        <taxon>Bangiaceae</taxon>
        <taxon>Pyropia</taxon>
    </lineage>
</organism>